<keyword id="KW-0027">Amidation</keyword>
<keyword id="KW-0903">Direct protein sequencing</keyword>
<keyword id="KW-0527">Neuropeptide</keyword>
<keyword id="KW-0964">Secreted</keyword>
<protein>
    <recommendedName>
        <fullName evidence="3">Allatotropin-related peptide</fullName>
        <shortName evidence="3">ATRP</shortName>
    </recommendedName>
</protein>
<feature type="peptide" id="PRO_0000395620" description="Allatotropin-related peptide" evidence="2">
    <location>
        <begin position="1"/>
        <end position="13"/>
    </location>
</feature>
<feature type="modified residue" description="Phenylalanine amide" evidence="2">
    <location>
        <position position="13"/>
    </location>
</feature>
<organism>
    <name type="scientific">Banasa dimiata</name>
    <name type="common">Banasa stink bug</name>
    <name type="synonym">Pentatoma dimiata</name>
    <dbReference type="NCBI Taxonomy" id="756487"/>
    <lineage>
        <taxon>Eukaryota</taxon>
        <taxon>Metazoa</taxon>
        <taxon>Ecdysozoa</taxon>
        <taxon>Arthropoda</taxon>
        <taxon>Hexapoda</taxon>
        <taxon>Insecta</taxon>
        <taxon>Pterygota</taxon>
        <taxon>Neoptera</taxon>
        <taxon>Paraneoptera</taxon>
        <taxon>Hemiptera</taxon>
        <taxon>Heteroptera</taxon>
        <taxon>Panheteroptera</taxon>
        <taxon>Pentatomomorpha</taxon>
        <taxon>Pentatomoidea</taxon>
        <taxon>Pentatomidae</taxon>
        <taxon>Pentatominae</taxon>
        <taxon>Banasa</taxon>
    </lineage>
</organism>
<sequence length="13" mass="1368">GFKNVALSTARGF</sequence>
<comment type="subcellular location">
    <subcellularLocation>
        <location evidence="1">Secreted</location>
    </subcellularLocation>
</comment>
<comment type="tissue specificity">
    <text evidence="2">Expressed in the posterior region of the abdominal ventral nerve cord and in the fourth abdominal nerves (at protein level).</text>
</comment>
<comment type="mass spectrometry" mass="1366.8" method="MALDI" evidence="2"/>
<accession>P86551</accession>
<proteinExistence type="evidence at protein level"/>
<dbReference type="GO" id="GO:0005576">
    <property type="term" value="C:extracellular region"/>
    <property type="evidence" value="ECO:0000250"/>
    <property type="project" value="UniProtKB"/>
</dbReference>
<dbReference type="GO" id="GO:0007218">
    <property type="term" value="P:neuropeptide signaling pathway"/>
    <property type="evidence" value="ECO:0007669"/>
    <property type="project" value="UniProtKB-KW"/>
</dbReference>
<reference evidence="4" key="1">
    <citation type="journal article" date="2009" name="Peptides">
        <title>Neuropeptides in Heteroptera: identification of allatotropin-related peptide and tachykinin-related peptides using MALDI-TOF mass spectrometry.</title>
        <authorList>
            <person name="Neupert S."/>
            <person name="Russell W.K."/>
            <person name="Russell D.H."/>
            <person name="Lopez J.D. Jr."/>
            <person name="Predel R."/>
            <person name="Nachman R.J."/>
        </authorList>
    </citation>
    <scope>PROTEIN SEQUENCE</scope>
    <scope>TISSUE SPECIFICITY</scope>
    <scope>MASS SPECTROMETRY</scope>
    <scope>AMIDATION AT PHE-13</scope>
    <source>
        <tissue evidence="2">Ventral nerve cord</tissue>
    </source>
</reference>
<name>ALLTR_BANDI</name>
<evidence type="ECO:0000250" key="1">
    <source>
        <dbReference type="UniProtKB" id="P21786"/>
    </source>
</evidence>
<evidence type="ECO:0000269" key="2">
    <source>
    </source>
</evidence>
<evidence type="ECO:0000303" key="3">
    <source>
    </source>
</evidence>
<evidence type="ECO:0000305" key="4"/>